<reference key="1">
    <citation type="submission" date="2009-05" db="EMBL/GenBank/DDBJ databases">
        <title>Complete sequence of Tolumonas auensis DSM 9187.</title>
        <authorList>
            <consortium name="US DOE Joint Genome Institute"/>
            <person name="Lucas S."/>
            <person name="Copeland A."/>
            <person name="Lapidus A."/>
            <person name="Glavina del Rio T."/>
            <person name="Tice H."/>
            <person name="Bruce D."/>
            <person name="Goodwin L."/>
            <person name="Pitluck S."/>
            <person name="Chertkov O."/>
            <person name="Brettin T."/>
            <person name="Detter J.C."/>
            <person name="Han C."/>
            <person name="Larimer F."/>
            <person name="Land M."/>
            <person name="Hauser L."/>
            <person name="Kyrpides N."/>
            <person name="Mikhailova N."/>
            <person name="Spring S."/>
            <person name="Beller H."/>
        </authorList>
    </citation>
    <scope>NUCLEOTIDE SEQUENCE [LARGE SCALE GENOMIC DNA]</scope>
    <source>
        <strain>DSM 9187 / NBRC 110442 / TA 4</strain>
    </source>
</reference>
<dbReference type="EMBL" id="CP001616">
    <property type="protein sequence ID" value="ACQ92900.1"/>
    <property type="molecule type" value="Genomic_DNA"/>
</dbReference>
<dbReference type="RefSeq" id="WP_012729499.1">
    <property type="nucleotide sequence ID" value="NC_012691.1"/>
</dbReference>
<dbReference type="STRING" id="595494.Tola_1283"/>
<dbReference type="KEGG" id="tau:Tola_1283"/>
<dbReference type="eggNOG" id="COG1970">
    <property type="taxonomic scope" value="Bacteria"/>
</dbReference>
<dbReference type="HOGENOM" id="CLU_095787_2_3_6"/>
<dbReference type="OrthoDB" id="9810350at2"/>
<dbReference type="Proteomes" id="UP000009073">
    <property type="component" value="Chromosome"/>
</dbReference>
<dbReference type="GO" id="GO:0005886">
    <property type="term" value="C:plasma membrane"/>
    <property type="evidence" value="ECO:0007669"/>
    <property type="project" value="UniProtKB-SubCell"/>
</dbReference>
<dbReference type="GO" id="GO:0008381">
    <property type="term" value="F:mechanosensitive monoatomic ion channel activity"/>
    <property type="evidence" value="ECO:0007669"/>
    <property type="project" value="UniProtKB-UniRule"/>
</dbReference>
<dbReference type="Gene3D" id="1.10.1200.120">
    <property type="entry name" value="Large-conductance mechanosensitive channel, MscL, domain 1"/>
    <property type="match status" value="1"/>
</dbReference>
<dbReference type="HAMAP" id="MF_00115">
    <property type="entry name" value="MscL"/>
    <property type="match status" value="1"/>
</dbReference>
<dbReference type="InterPro" id="IPR019823">
    <property type="entry name" value="Mechanosensitive_channel_CS"/>
</dbReference>
<dbReference type="InterPro" id="IPR001185">
    <property type="entry name" value="MS_channel"/>
</dbReference>
<dbReference type="InterPro" id="IPR037673">
    <property type="entry name" value="MSC/AndL"/>
</dbReference>
<dbReference type="InterPro" id="IPR036019">
    <property type="entry name" value="MscL_channel"/>
</dbReference>
<dbReference type="NCBIfam" id="TIGR00220">
    <property type="entry name" value="mscL"/>
    <property type="match status" value="1"/>
</dbReference>
<dbReference type="NCBIfam" id="NF001843">
    <property type="entry name" value="PRK00567.1-4"/>
    <property type="match status" value="1"/>
</dbReference>
<dbReference type="PANTHER" id="PTHR30266:SF2">
    <property type="entry name" value="LARGE-CONDUCTANCE MECHANOSENSITIVE CHANNEL"/>
    <property type="match status" value="1"/>
</dbReference>
<dbReference type="PANTHER" id="PTHR30266">
    <property type="entry name" value="MECHANOSENSITIVE CHANNEL MSCL"/>
    <property type="match status" value="1"/>
</dbReference>
<dbReference type="Pfam" id="PF01741">
    <property type="entry name" value="MscL"/>
    <property type="match status" value="1"/>
</dbReference>
<dbReference type="PRINTS" id="PR01264">
    <property type="entry name" value="MECHCHANNEL"/>
</dbReference>
<dbReference type="SUPFAM" id="SSF81330">
    <property type="entry name" value="Gated mechanosensitive channel"/>
    <property type="match status" value="1"/>
</dbReference>
<dbReference type="PROSITE" id="PS01327">
    <property type="entry name" value="MSCL"/>
    <property type="match status" value="1"/>
</dbReference>
<feature type="chain" id="PRO_1000202979" description="Large-conductance mechanosensitive channel">
    <location>
        <begin position="1"/>
        <end position="147"/>
    </location>
</feature>
<feature type="transmembrane region" description="Helical" evidence="1">
    <location>
        <begin position="14"/>
        <end position="34"/>
    </location>
</feature>
<feature type="transmembrane region" description="Helical" evidence="1">
    <location>
        <begin position="85"/>
        <end position="105"/>
    </location>
</feature>
<name>MSCL_TOLAT</name>
<sequence>MLGEFKKFAMRGNVVDMAVGIVIGAAFGSIVKSLVDDVLMPPIGLLLGGVDFSDFFVVLKEGVKAAAPYQTLAEAKAAGAVTLNFGLFVNAIISFTIVAFALFMIVKAMNKLRADEEVKPVTTKKCPHCCSEIALEATRCPHCTSEL</sequence>
<gene>
    <name evidence="1" type="primary">mscL</name>
    <name type="ordered locus">Tola_1283</name>
</gene>
<keyword id="KW-0997">Cell inner membrane</keyword>
<keyword id="KW-1003">Cell membrane</keyword>
<keyword id="KW-0407">Ion channel</keyword>
<keyword id="KW-0406">Ion transport</keyword>
<keyword id="KW-0472">Membrane</keyword>
<keyword id="KW-1185">Reference proteome</keyword>
<keyword id="KW-0812">Transmembrane</keyword>
<keyword id="KW-1133">Transmembrane helix</keyword>
<keyword id="KW-0813">Transport</keyword>
<protein>
    <recommendedName>
        <fullName evidence="1">Large-conductance mechanosensitive channel</fullName>
    </recommendedName>
</protein>
<organism>
    <name type="scientific">Tolumonas auensis (strain DSM 9187 / NBRC 110442 / TA 4)</name>
    <dbReference type="NCBI Taxonomy" id="595494"/>
    <lineage>
        <taxon>Bacteria</taxon>
        <taxon>Pseudomonadati</taxon>
        <taxon>Pseudomonadota</taxon>
        <taxon>Gammaproteobacteria</taxon>
        <taxon>Aeromonadales</taxon>
        <taxon>Aeromonadaceae</taxon>
        <taxon>Tolumonas</taxon>
    </lineage>
</organism>
<comment type="function">
    <text evidence="1">Channel that opens in response to stretch forces in the membrane lipid bilayer. May participate in the regulation of osmotic pressure changes within the cell.</text>
</comment>
<comment type="subunit">
    <text evidence="1">Homopentamer.</text>
</comment>
<comment type="subcellular location">
    <subcellularLocation>
        <location evidence="1">Cell inner membrane</location>
        <topology evidence="1">Multi-pass membrane protein</topology>
    </subcellularLocation>
</comment>
<comment type="similarity">
    <text evidence="1">Belongs to the MscL family.</text>
</comment>
<proteinExistence type="inferred from homology"/>
<accession>C4LE79</accession>
<evidence type="ECO:0000255" key="1">
    <source>
        <dbReference type="HAMAP-Rule" id="MF_00115"/>
    </source>
</evidence>